<evidence type="ECO:0000250" key="1"/>
<evidence type="ECO:0000255" key="2">
    <source>
        <dbReference type="HAMAP-Rule" id="MF_00103"/>
    </source>
</evidence>
<evidence type="ECO:0000269" key="3">
    <source>
    </source>
</evidence>
<protein>
    <recommendedName>
        <fullName evidence="2">Formamidopyrimidine-DNA glycosylase</fullName>
        <shortName evidence="2">Fapy-DNA glycosylase</shortName>
        <ecNumber evidence="2">3.2.2.23</ecNumber>
    </recommendedName>
    <alternativeName>
        <fullName evidence="2">DNA-(apurinic or apyrimidinic site) lyase MutM</fullName>
        <shortName evidence="2">AP lyase MutM</shortName>
        <ecNumber evidence="2">4.2.99.18</ecNumber>
    </alternativeName>
</protein>
<accession>A0QV21</accession>
<accession>I7G6H6</accession>
<organism>
    <name type="scientific">Mycolicibacterium smegmatis (strain ATCC 700084 / mc(2)155)</name>
    <name type="common">Mycobacterium smegmatis</name>
    <dbReference type="NCBI Taxonomy" id="246196"/>
    <lineage>
        <taxon>Bacteria</taxon>
        <taxon>Bacillati</taxon>
        <taxon>Actinomycetota</taxon>
        <taxon>Actinomycetes</taxon>
        <taxon>Mycobacteriales</taxon>
        <taxon>Mycobacteriaceae</taxon>
        <taxon>Mycolicibacterium</taxon>
    </lineage>
</organism>
<gene>
    <name type="primary">fpg</name>
    <name type="synonym">mutM</name>
    <name type="ordered locus">MSMEG_2419</name>
    <name type="ordered locus">MSMEI_2358</name>
</gene>
<sequence length="285" mass="31669">MPELPEVEVVRRGLAEHVTGKTITGVRVHHPRAVRRHEAGPADLTARLLDVRITGTGRRGKYLWLTLDDSAALVVHLGMSGQMLLGPIRDTRHLRIAAVLDDGTALSFVDQRTFGGWQLTEMVTVDGTDVPEPVAHIARDPLDPLFDRDRVVTVLRGKHSEIKRQLLDQTVVSGIGNIYADEALWRTKINGARIAAALPRRRLAELLDAAAEVMTDALGQGGTSFDSLYVNVNGESGYFDRSLDAYGREGEPCRRCGAIMRREKFMNRSSFYCPRCQPRPRVPRV</sequence>
<keyword id="KW-0227">DNA damage</keyword>
<keyword id="KW-0234">DNA repair</keyword>
<keyword id="KW-0238">DNA-binding</keyword>
<keyword id="KW-0326">Glycosidase</keyword>
<keyword id="KW-0378">Hydrolase</keyword>
<keyword id="KW-0456">Lyase</keyword>
<keyword id="KW-0479">Metal-binding</keyword>
<keyword id="KW-0511">Multifunctional enzyme</keyword>
<keyword id="KW-1185">Reference proteome</keyword>
<keyword id="KW-0862">Zinc</keyword>
<keyword id="KW-0863">Zinc-finger</keyword>
<comment type="function">
    <text evidence="3">Involved in base excision repair of DNA damaged by oxidation or by mutagenic agents. Acts as a DNA glycosylase that recognizes and removes damaged bases. Acts on oxidized purines, such as 7,8-dihydro-8-oxoguanine (8-oxoG) when paired with C, G or T. Has AP (apurinic/apyrimidinic) lyase activity and introduces nicks in the DNA strand. Cleaves the DNA backbone by beta-delta elimination to generate a single-strand break at the site of the removed base with both 3'- and 5'-phosphates.</text>
</comment>
<comment type="catalytic activity">
    <reaction evidence="2">
        <text>Hydrolysis of DNA containing ring-opened 7-methylguanine residues, releasing 2,6-diamino-4-hydroxy-5-(N-methyl)formamidopyrimidine.</text>
        <dbReference type="EC" id="3.2.2.23"/>
    </reaction>
</comment>
<comment type="catalytic activity">
    <reaction evidence="2">
        <text>2'-deoxyribonucleotide-(2'-deoxyribose 5'-phosphate)-2'-deoxyribonucleotide-DNA = a 3'-end 2'-deoxyribonucleotide-(2,3-dehydro-2,3-deoxyribose 5'-phosphate)-DNA + a 5'-end 5'-phospho-2'-deoxyribonucleoside-DNA + H(+)</text>
        <dbReference type="Rhea" id="RHEA:66592"/>
        <dbReference type="Rhea" id="RHEA-COMP:13180"/>
        <dbReference type="Rhea" id="RHEA-COMP:16897"/>
        <dbReference type="Rhea" id="RHEA-COMP:17067"/>
        <dbReference type="ChEBI" id="CHEBI:15378"/>
        <dbReference type="ChEBI" id="CHEBI:136412"/>
        <dbReference type="ChEBI" id="CHEBI:157695"/>
        <dbReference type="ChEBI" id="CHEBI:167181"/>
        <dbReference type="EC" id="4.2.99.18"/>
    </reaction>
</comment>
<comment type="cofactor">
    <cofactor evidence="2">
        <name>Zn(2+)</name>
        <dbReference type="ChEBI" id="CHEBI:29105"/>
    </cofactor>
    <text evidence="2">Binds 1 zinc ion per subunit.</text>
</comment>
<comment type="subunit">
    <text evidence="2">Monomer.</text>
</comment>
<comment type="disruption phenotype">
    <text evidence="3">Loss of excision of 8-oxoG from dsDNA. No significant growth in the presence of 3 mM H(2)O(2). 4-fold increase in mutation frequency upon plating on rifampicin (mutator phenotype); an increase in A to G and C to G mutations is seen.</text>
</comment>
<comment type="similarity">
    <text evidence="2">Belongs to the FPG family.</text>
</comment>
<reference key="1">
    <citation type="submission" date="2006-10" db="EMBL/GenBank/DDBJ databases">
        <authorList>
            <person name="Fleischmann R.D."/>
            <person name="Dodson R.J."/>
            <person name="Haft D.H."/>
            <person name="Merkel J.S."/>
            <person name="Nelson W.C."/>
            <person name="Fraser C.M."/>
        </authorList>
    </citation>
    <scope>NUCLEOTIDE SEQUENCE [LARGE SCALE GENOMIC DNA]</scope>
    <source>
        <strain>ATCC 700084 / mc(2)155</strain>
    </source>
</reference>
<reference key="2">
    <citation type="journal article" date="2007" name="Genome Biol.">
        <title>Interrupted coding sequences in Mycobacterium smegmatis: authentic mutations or sequencing errors?</title>
        <authorList>
            <person name="Deshayes C."/>
            <person name="Perrodou E."/>
            <person name="Gallien S."/>
            <person name="Euphrasie D."/>
            <person name="Schaeffer C."/>
            <person name="Van-Dorsselaer A."/>
            <person name="Poch O."/>
            <person name="Lecompte O."/>
            <person name="Reyrat J.-M."/>
        </authorList>
    </citation>
    <scope>NUCLEOTIDE SEQUENCE [LARGE SCALE GENOMIC DNA]</scope>
    <source>
        <strain>ATCC 700084 / mc(2)155</strain>
    </source>
</reference>
<reference key="3">
    <citation type="journal article" date="2009" name="Genome Res.">
        <title>Ortho-proteogenomics: multiple proteomes investigation through orthology and a new MS-based protocol.</title>
        <authorList>
            <person name="Gallien S."/>
            <person name="Perrodou E."/>
            <person name="Carapito C."/>
            <person name="Deshayes C."/>
            <person name="Reyrat J.-M."/>
            <person name="Van Dorsselaer A."/>
            <person name="Poch O."/>
            <person name="Schaeffer C."/>
            <person name="Lecompte O."/>
        </authorList>
    </citation>
    <scope>NUCLEOTIDE SEQUENCE [LARGE SCALE GENOMIC DNA]</scope>
    <source>
        <strain>ATCC 700084 / mc(2)155</strain>
    </source>
</reference>
<reference key="4">
    <citation type="journal article" date="2007" name="DNA Repair">
        <title>A distinct role of formamidopyrimidine DNA glycosylase (MutM) in down-regulation of accumulation of G, C mutations and protection against oxidative stress in mycobacteria.</title>
        <authorList>
            <person name="Jain R."/>
            <person name="Kumar P."/>
            <person name="Varshney U."/>
        </authorList>
    </citation>
    <scope>FUNCTION</scope>
    <scope>DISRUPTION PHENOTYPE</scope>
    <source>
        <strain>ATCC 700084 / mc(2)155</strain>
    </source>
</reference>
<reference key="5">
    <citation type="journal article" date="2011" name="Tuberculosis">
        <title>Base excision and nucleotide excision repair pathways in mycobacteria.</title>
        <authorList>
            <person name="Kurthkoti K."/>
            <person name="Varshney U."/>
        </authorList>
    </citation>
    <scope>REVIEW</scope>
</reference>
<feature type="initiator methionine" description="Removed" evidence="1">
    <location>
        <position position="1"/>
    </location>
</feature>
<feature type="chain" id="PRO_1000008719" description="Formamidopyrimidine-DNA glycosylase">
    <location>
        <begin position="2"/>
        <end position="285"/>
    </location>
</feature>
<feature type="zinc finger region" description="FPG-type" evidence="2">
    <location>
        <begin position="244"/>
        <end position="278"/>
    </location>
</feature>
<feature type="active site" description="Schiff-base intermediate with DNA" evidence="2">
    <location>
        <position position="2"/>
    </location>
</feature>
<feature type="active site" description="Proton donor" evidence="2">
    <location>
        <position position="3"/>
    </location>
</feature>
<feature type="active site" description="Proton donor; for beta-elimination activity" evidence="2">
    <location>
        <position position="61"/>
    </location>
</feature>
<feature type="active site" description="Proton donor; for delta-elimination activity" evidence="2">
    <location>
        <position position="268"/>
    </location>
</feature>
<feature type="binding site" evidence="2">
    <location>
        <position position="93"/>
    </location>
    <ligand>
        <name>DNA</name>
        <dbReference type="ChEBI" id="CHEBI:16991"/>
    </ligand>
</feature>
<feature type="binding site" evidence="2">
    <location>
        <position position="112"/>
    </location>
    <ligand>
        <name>DNA</name>
        <dbReference type="ChEBI" id="CHEBI:16991"/>
    </ligand>
</feature>
<feature type="binding site" evidence="2">
    <location>
        <position position="158"/>
    </location>
    <ligand>
        <name>DNA</name>
        <dbReference type="ChEBI" id="CHEBI:16991"/>
    </ligand>
</feature>
<dbReference type="EC" id="3.2.2.23" evidence="2"/>
<dbReference type="EC" id="4.2.99.18" evidence="2"/>
<dbReference type="EMBL" id="CP000480">
    <property type="protein sequence ID" value="ABK72450.1"/>
    <property type="molecule type" value="Genomic_DNA"/>
</dbReference>
<dbReference type="EMBL" id="CP001663">
    <property type="protein sequence ID" value="AFP38826.1"/>
    <property type="molecule type" value="Genomic_DNA"/>
</dbReference>
<dbReference type="RefSeq" id="WP_011728330.1">
    <property type="nucleotide sequence ID" value="NZ_SIJM01000012.1"/>
</dbReference>
<dbReference type="RefSeq" id="YP_886759.1">
    <property type="nucleotide sequence ID" value="NC_008596.1"/>
</dbReference>
<dbReference type="SMR" id="A0QV21"/>
<dbReference type="STRING" id="246196.MSMEG_2419"/>
<dbReference type="PaxDb" id="246196-MSMEI_2358"/>
<dbReference type="GeneID" id="93457210"/>
<dbReference type="KEGG" id="msb:LJ00_12030"/>
<dbReference type="KEGG" id="msg:MSMEI_2358"/>
<dbReference type="KEGG" id="msm:MSMEG_2419"/>
<dbReference type="PATRIC" id="fig|246196.19.peg.2384"/>
<dbReference type="eggNOG" id="COG0266">
    <property type="taxonomic scope" value="Bacteria"/>
</dbReference>
<dbReference type="OrthoDB" id="9800855at2"/>
<dbReference type="Proteomes" id="UP000000757">
    <property type="component" value="Chromosome"/>
</dbReference>
<dbReference type="Proteomes" id="UP000006158">
    <property type="component" value="Chromosome"/>
</dbReference>
<dbReference type="GO" id="GO:0034039">
    <property type="term" value="F:8-oxo-7,8-dihydroguanine DNA N-glycosylase activity"/>
    <property type="evidence" value="ECO:0007669"/>
    <property type="project" value="TreeGrafter"/>
</dbReference>
<dbReference type="GO" id="GO:0140078">
    <property type="term" value="F:class I DNA-(apurinic or apyrimidinic site) endonuclease activity"/>
    <property type="evidence" value="ECO:0007669"/>
    <property type="project" value="UniProtKB-EC"/>
</dbReference>
<dbReference type="GO" id="GO:0003684">
    <property type="term" value="F:damaged DNA binding"/>
    <property type="evidence" value="ECO:0007669"/>
    <property type="project" value="InterPro"/>
</dbReference>
<dbReference type="GO" id="GO:0008270">
    <property type="term" value="F:zinc ion binding"/>
    <property type="evidence" value="ECO:0007669"/>
    <property type="project" value="UniProtKB-UniRule"/>
</dbReference>
<dbReference type="GO" id="GO:0006284">
    <property type="term" value="P:base-excision repair"/>
    <property type="evidence" value="ECO:0007669"/>
    <property type="project" value="InterPro"/>
</dbReference>
<dbReference type="CDD" id="cd08966">
    <property type="entry name" value="EcFpg-like_N"/>
    <property type="match status" value="1"/>
</dbReference>
<dbReference type="FunFam" id="1.10.8.50:FF:000003">
    <property type="entry name" value="Formamidopyrimidine-DNA glycosylase"/>
    <property type="match status" value="1"/>
</dbReference>
<dbReference type="FunFam" id="3.20.190.10:FF:000006">
    <property type="entry name" value="Formamidopyrimidine-DNA glycosylase"/>
    <property type="match status" value="1"/>
</dbReference>
<dbReference type="Gene3D" id="1.10.8.50">
    <property type="match status" value="1"/>
</dbReference>
<dbReference type="Gene3D" id="3.20.190.10">
    <property type="entry name" value="MutM-like, N-terminal"/>
    <property type="match status" value="1"/>
</dbReference>
<dbReference type="HAMAP" id="MF_00103">
    <property type="entry name" value="Fapy_DNA_glycosyl"/>
    <property type="match status" value="1"/>
</dbReference>
<dbReference type="InterPro" id="IPR015886">
    <property type="entry name" value="DNA_glyclase/AP_lyase_DNA-bd"/>
</dbReference>
<dbReference type="InterPro" id="IPR015887">
    <property type="entry name" value="DNA_glyclase_Znf_dom_DNA_BS"/>
</dbReference>
<dbReference type="InterPro" id="IPR020629">
    <property type="entry name" value="Formamido-pyr_DNA_Glyclase"/>
</dbReference>
<dbReference type="InterPro" id="IPR012319">
    <property type="entry name" value="FPG_cat"/>
</dbReference>
<dbReference type="InterPro" id="IPR035937">
    <property type="entry name" value="MutM-like_N-ter"/>
</dbReference>
<dbReference type="InterPro" id="IPR010979">
    <property type="entry name" value="Ribosomal_uS13-like_H2TH"/>
</dbReference>
<dbReference type="InterPro" id="IPR000214">
    <property type="entry name" value="Znf_DNA_glyclase/AP_lyase"/>
</dbReference>
<dbReference type="InterPro" id="IPR010663">
    <property type="entry name" value="Znf_FPG/IleRS"/>
</dbReference>
<dbReference type="NCBIfam" id="TIGR00577">
    <property type="entry name" value="fpg"/>
    <property type="match status" value="1"/>
</dbReference>
<dbReference type="NCBIfam" id="NF002211">
    <property type="entry name" value="PRK01103.1"/>
    <property type="match status" value="1"/>
</dbReference>
<dbReference type="PANTHER" id="PTHR22993">
    <property type="entry name" value="FORMAMIDOPYRIMIDINE-DNA GLYCOSYLASE"/>
    <property type="match status" value="1"/>
</dbReference>
<dbReference type="PANTHER" id="PTHR22993:SF9">
    <property type="entry name" value="FORMAMIDOPYRIMIDINE-DNA GLYCOSYLASE"/>
    <property type="match status" value="1"/>
</dbReference>
<dbReference type="Pfam" id="PF01149">
    <property type="entry name" value="Fapy_DNA_glyco"/>
    <property type="match status" value="1"/>
</dbReference>
<dbReference type="Pfam" id="PF06831">
    <property type="entry name" value="H2TH"/>
    <property type="match status" value="1"/>
</dbReference>
<dbReference type="Pfam" id="PF06827">
    <property type="entry name" value="zf-FPG_IleRS"/>
    <property type="match status" value="1"/>
</dbReference>
<dbReference type="SMART" id="SM00898">
    <property type="entry name" value="Fapy_DNA_glyco"/>
    <property type="match status" value="1"/>
</dbReference>
<dbReference type="SMART" id="SM01232">
    <property type="entry name" value="H2TH"/>
    <property type="match status" value="1"/>
</dbReference>
<dbReference type="SUPFAM" id="SSF57716">
    <property type="entry name" value="Glucocorticoid receptor-like (DNA-binding domain)"/>
    <property type="match status" value="1"/>
</dbReference>
<dbReference type="SUPFAM" id="SSF81624">
    <property type="entry name" value="N-terminal domain of MutM-like DNA repair proteins"/>
    <property type="match status" value="1"/>
</dbReference>
<dbReference type="SUPFAM" id="SSF46946">
    <property type="entry name" value="S13-like H2TH domain"/>
    <property type="match status" value="1"/>
</dbReference>
<dbReference type="PROSITE" id="PS51068">
    <property type="entry name" value="FPG_CAT"/>
    <property type="match status" value="1"/>
</dbReference>
<dbReference type="PROSITE" id="PS01242">
    <property type="entry name" value="ZF_FPG_1"/>
    <property type="match status" value="1"/>
</dbReference>
<dbReference type="PROSITE" id="PS51066">
    <property type="entry name" value="ZF_FPG_2"/>
    <property type="match status" value="1"/>
</dbReference>
<name>FPG_MYCS2</name>
<proteinExistence type="inferred from homology"/>